<sequence length="409" mass="44700">MEGPASSKPLKDKTNPWGPLIILGILIRAGVSVQLDSPHQVSNVTWRVTNLMTGQTANATSLLGTMTEAFPKLYFDLCDLMGDDWDETGLGCRTPGGRKRARTFDFYVCPGHTVPTGCGGPREGYCGKWGCETTGQAYWKPSSSWDLISLKRGNTPKDQGPCYDSSVSSGVLGATPGGRCNPLVLEFTDAGRKASWDAPKVWGLRLYRSTGTDPVTRFSLTRQVLDIGPRVPIGSNPVTTDQLPLSRPVQTMPPRPLQPPPPGAASIVPETAPPPQQPGAGDRLLNLVDGAYQALNLTNPDKIQECWLCLVSGPPYYEGVVVLGTYFNHTIALKEKCCFYADHTGLVRDSMAKLRKRLTQRQKLFESSRGWFEGSSNRSPWFTTLISAIMGSLIILLLLLILLIWTLYS</sequence>
<feature type="signal peptide" evidence="2">
    <location>
        <begin position="1"/>
        <end position="32"/>
    </location>
</feature>
<feature type="chain" id="PRO_0000040720" description="Glycoprotein 55">
    <location>
        <begin position="33"/>
        <end position="409"/>
    </location>
</feature>
<feature type="topological domain" description="Virion surface" evidence="2">
    <location>
        <begin position="33"/>
        <end position="384"/>
    </location>
</feature>
<feature type="transmembrane region" description="Helical" evidence="2">
    <location>
        <begin position="385"/>
        <end position="405"/>
    </location>
</feature>
<feature type="topological domain" description="Intravirion" evidence="2">
    <location>
        <begin position="406"/>
        <end position="409"/>
    </location>
</feature>
<feature type="region of interest" description="Disordered" evidence="3">
    <location>
        <begin position="232"/>
        <end position="280"/>
    </location>
</feature>
<feature type="compositionally biased region" description="Pro residues" evidence="3">
    <location>
        <begin position="251"/>
        <end position="263"/>
    </location>
</feature>
<feature type="glycosylation site" description="N-linked (GlcNAc...) asparagine; by host" evidence="2">
    <location>
        <position position="43"/>
    </location>
</feature>
<feature type="glycosylation site" description="N-linked (GlcNAc...) asparagine; by host" evidence="2">
    <location>
        <position position="58"/>
    </location>
</feature>
<feature type="glycosylation site" description="N-linked (GlcNAc...) asparagine; by host" evidence="2">
    <location>
        <position position="296"/>
    </location>
</feature>
<feature type="glycosylation site" description="N-linked (GlcNAc...) asparagine; by host" evidence="2">
    <location>
        <position position="328"/>
    </location>
</feature>
<keyword id="KW-1015">Disulfide bond</keyword>
<keyword id="KW-1169">Fusion of virus membrane with host cell membrane</keyword>
<keyword id="KW-1168">Fusion of virus membrane with host membrane</keyword>
<keyword id="KW-0325">Glycoprotein</keyword>
<keyword id="KW-1032">Host cell membrane</keyword>
<keyword id="KW-1038">Host endoplasmic reticulum</keyword>
<keyword id="KW-1043">Host membrane</keyword>
<keyword id="KW-0945">Host-virus interaction</keyword>
<keyword id="KW-0472">Membrane</keyword>
<keyword id="KW-0553">Oncogene</keyword>
<keyword id="KW-0732">Signal</keyword>
<keyword id="KW-0812">Transmembrane</keyword>
<keyword id="KW-1133">Transmembrane helix</keyword>
<keyword id="KW-1161">Viral attachment to host cell</keyword>
<keyword id="KW-0261">Viral envelope protein</keyword>
<keyword id="KW-1162">Viral penetration into host cytoplasm</keyword>
<keyword id="KW-0946">Virion</keyword>
<keyword id="KW-1160">Virus entry into host cell</keyword>
<evidence type="ECO:0000250" key="1"/>
<evidence type="ECO:0000255" key="2"/>
<evidence type="ECO:0000256" key="3">
    <source>
        <dbReference type="SAM" id="MobiDB-lite"/>
    </source>
</evidence>
<organismHost>
    <name type="scientific">Mus musculus</name>
    <name type="common">Mouse</name>
    <dbReference type="NCBI Taxonomy" id="10090"/>
</organismHost>
<gene>
    <name type="primary">env</name>
</gene>
<reference key="1">
    <citation type="journal article" date="1983" name="Proc. Natl. Acad. Sci. U.S.A.">
        <title>Envelope gene of the Friend spleen focus-forming virus: deletion and insertions in 3' gp70/p15E-encoding region have resulted in unique features in the primary structure of its protein product.</title>
        <authorList>
            <person name="Wolff L."/>
            <person name="Scolnick E."/>
            <person name="Ruscetti S."/>
        </authorList>
    </citation>
    <scope>NUCLEOTIDE SEQUENCE [GENOMIC DNA]</scope>
</reference>
<comment type="function">
    <text evidence="1">This envelope-like membrane glycoprotein is responsible for ligand-independent activation of the erythropoietin receptor EPOR leading to the abnormally rapid proliferation of erythroid precursor cells. In the first stage of Friend disease, constitutive activation of EPOR by gp55 causes uncontrolled, polyclonal proliferation of infected erythroblasts, leading to polycythemia (massive increase in the number of mature red cells). Host susceptibility to SSFV-induced erythroblastosis depends on the expression of the truncated isoform of MST1R receptor tyrosine kinase (MST1R isoform sf-Stk). Interaction with SSFV gp 55 results in constitutive tyrosine phosphorylation and activation of MST1R isoform sf-Stk (By similarity).</text>
</comment>
<comment type="subunit">
    <text evidence="1">Homooligomer. Forms heterooligomers with mouse EPOR, probably via their respective transmembrane domains. Forms covalent heterodimers with mouse MST1R isoform sf-Stk, probably via disulfide bonds (By similarity).</text>
</comment>
<comment type="subcellular location">
    <subcellularLocation>
        <location>Host endoplasmic reticulum membrane</location>
        <topology>Single-pass type I membrane protein</topology>
    </subcellularLocation>
    <subcellularLocation>
        <location>Host cell membrane</location>
        <topology>Single-pass type I membrane protein</topology>
    </subcellularLocation>
    <subcellularLocation>
        <location>Virion membrane</location>
        <topology>Single-pass type I membrane protein</topology>
    </subcellularLocation>
    <text evidence="1">The envelope-like membrane glycoprotein gp55 is defective in its transport to the cell surface and remains associated predominantly with the rough endoplasmic reticulum (RER) membrane. It is almost not incorporated into virions. Host cell surface expression appears to be a prerequisite for its leukemogenicity (By similarity).</text>
</comment>
<comment type="miscellaneous">
    <text>Compared to other gammaretroviruses which possess 2 envelope proteins (gp70 and p15E), gp55 corresponds to a gp70-p15E fusion protein with a deletion of a portion of p15E. It is encoded by the defective env gene of the virus.</text>
</comment>
<comment type="miscellaneous">
    <text>The Friend murine leukemia virus complex induces a rapid and fatal erythroleukemia in adult mice. It is the replication-defective spleen focus-forming virus (SFFV) contained in this complex that causes foci of proliferating erythroid cells in spleens of infected mice. The second component is a replication competent Friend murine leukemia virus (F-MuLV) that serves as a helper virus for SFFV.</text>
</comment>
<accession>P03394</accession>
<proteinExistence type="inferred from homology"/>
<dbReference type="EMBL" id="V01552">
    <property type="protein sequence ID" value="CAA24793.1"/>
    <property type="molecule type" value="Genomic_DNA"/>
</dbReference>
<dbReference type="PIR" id="A03994">
    <property type="entry name" value="VCVW2S"/>
</dbReference>
<dbReference type="SMR" id="P03394"/>
<dbReference type="GlyCosmos" id="P03394">
    <property type="glycosylation" value="4 sites, No reported glycans"/>
</dbReference>
<dbReference type="GO" id="GO:0044167">
    <property type="term" value="C:host cell endoplasmic reticulum membrane"/>
    <property type="evidence" value="ECO:0007669"/>
    <property type="project" value="UniProtKB-SubCell"/>
</dbReference>
<dbReference type="GO" id="GO:0020002">
    <property type="term" value="C:host cell plasma membrane"/>
    <property type="evidence" value="ECO:0007669"/>
    <property type="project" value="UniProtKB-SubCell"/>
</dbReference>
<dbReference type="GO" id="GO:0016020">
    <property type="term" value="C:membrane"/>
    <property type="evidence" value="ECO:0007669"/>
    <property type="project" value="UniProtKB-KW"/>
</dbReference>
<dbReference type="GO" id="GO:0019031">
    <property type="term" value="C:viral envelope"/>
    <property type="evidence" value="ECO:0007669"/>
    <property type="project" value="UniProtKB-KW"/>
</dbReference>
<dbReference type="GO" id="GO:0055036">
    <property type="term" value="C:virion membrane"/>
    <property type="evidence" value="ECO:0007669"/>
    <property type="project" value="UniProtKB-SubCell"/>
</dbReference>
<dbReference type="GO" id="GO:0019064">
    <property type="term" value="P:fusion of virus membrane with host plasma membrane"/>
    <property type="evidence" value="ECO:0007669"/>
    <property type="project" value="UniProtKB-KW"/>
</dbReference>
<dbReference type="GO" id="GO:0046718">
    <property type="term" value="P:symbiont entry into host cell"/>
    <property type="evidence" value="ECO:0007669"/>
    <property type="project" value="UniProtKB-KW"/>
</dbReference>
<dbReference type="GO" id="GO:0019062">
    <property type="term" value="P:virion attachment to host cell"/>
    <property type="evidence" value="ECO:0007669"/>
    <property type="project" value="UniProtKB-KW"/>
</dbReference>
<dbReference type="Gene3D" id="1.10.287.210">
    <property type="match status" value="1"/>
</dbReference>
<dbReference type="Gene3D" id="3.90.310.10">
    <property type="entry name" value="ENV polyprotein, receptor-binding domain"/>
    <property type="match status" value="1"/>
</dbReference>
<dbReference type="InterPro" id="IPR008981">
    <property type="entry name" value="FMuLV_rcpt-bd"/>
</dbReference>
<dbReference type="InterPro" id="IPR018154">
    <property type="entry name" value="TLV/ENV_coat_polyprotein"/>
</dbReference>
<dbReference type="PANTHER" id="PTHR10424:SF72">
    <property type="entry name" value="BC035947 PROTEIN-RELATED"/>
    <property type="match status" value="1"/>
</dbReference>
<dbReference type="PANTHER" id="PTHR10424">
    <property type="entry name" value="VIRAL ENVELOPE PROTEIN"/>
    <property type="match status" value="1"/>
</dbReference>
<dbReference type="Pfam" id="PF00429">
    <property type="entry name" value="TLV_coat"/>
    <property type="match status" value="3"/>
</dbReference>
<dbReference type="SUPFAM" id="SSF49830">
    <property type="entry name" value="ENV polyprotein, receptor-binding domain"/>
    <property type="match status" value="1"/>
</dbReference>
<protein>
    <recommendedName>
        <fullName>Glycoprotein 55</fullName>
        <shortName>gp55</shortName>
    </recommendedName>
</protein>
<organism>
    <name type="scientific">Friend spleen focus-forming virus (strain Lilly-Steeves)</name>
    <name type="common">FSFFV</name>
    <dbReference type="NCBI Taxonomy" id="355328"/>
    <lineage>
        <taxon>Viruses</taxon>
        <taxon>Riboviria</taxon>
        <taxon>Pararnavirae</taxon>
        <taxon>Artverviricota</taxon>
        <taxon>Revtraviricetes</taxon>
        <taxon>Ortervirales</taxon>
        <taxon>Retroviridae</taxon>
        <taxon>Orthoretrovirinae</taxon>
        <taxon>Gammaretrovirus</taxon>
        <taxon>Spleen focus-forming virus</taxon>
    </lineage>
</organism>
<name>ENV_FRSFL</name>